<evidence type="ECO:0000250" key="1">
    <source>
        <dbReference type="UniProtKB" id="O00213"/>
    </source>
</evidence>
<evidence type="ECO:0000250" key="2">
    <source>
        <dbReference type="UniProtKB" id="P46933"/>
    </source>
</evidence>
<evidence type="ECO:0000255" key="3">
    <source>
        <dbReference type="PROSITE-ProRule" id="PRU00148"/>
    </source>
</evidence>
<evidence type="ECO:0000255" key="4">
    <source>
        <dbReference type="PROSITE-ProRule" id="PRU00224"/>
    </source>
</evidence>
<evidence type="ECO:0000256" key="5">
    <source>
        <dbReference type="SAM" id="MobiDB-lite"/>
    </source>
</evidence>
<evidence type="ECO:0000269" key="6">
    <source>
    </source>
</evidence>
<evidence type="ECO:0000269" key="7">
    <source>
    </source>
</evidence>
<evidence type="ECO:0000269" key="8">
    <source>
    </source>
</evidence>
<evidence type="ECO:0000269" key="9">
    <source>
    </source>
</evidence>
<evidence type="ECO:0000269" key="10">
    <source>
    </source>
</evidence>
<evidence type="ECO:0000269" key="11">
    <source>
    </source>
</evidence>
<evidence type="ECO:0000303" key="12">
    <source>
    </source>
</evidence>
<evidence type="ECO:0000303" key="13">
    <source>
    </source>
</evidence>
<evidence type="ECO:0000303" key="14">
    <source>
    </source>
</evidence>
<evidence type="ECO:0000303" key="15">
    <source ref="1"/>
</evidence>
<evidence type="ECO:0000305" key="16"/>
<evidence type="ECO:0000312" key="17">
    <source>
        <dbReference type="MGI" id="MGI:107765"/>
    </source>
</evidence>
<evidence type="ECO:0007744" key="18">
    <source>
    </source>
</evidence>
<dbReference type="EMBL" id="AF206720">
    <property type="protein sequence ID" value="AAF20141.1"/>
    <property type="molecule type" value="mRNA"/>
</dbReference>
<dbReference type="EMBL" id="AK030748">
    <property type="protein sequence ID" value="BAC27116.1"/>
    <property type="molecule type" value="mRNA"/>
</dbReference>
<dbReference type="EMBL" id="AK083830">
    <property type="protein sequence ID" value="BAC39033.1"/>
    <property type="molecule type" value="mRNA"/>
</dbReference>
<dbReference type="EMBL" id="AK164140">
    <property type="protein sequence ID" value="BAE37645.1"/>
    <property type="molecule type" value="mRNA"/>
</dbReference>
<dbReference type="EMBL" id="AC125227">
    <property type="status" value="NOT_ANNOTATED_CDS"/>
    <property type="molecule type" value="Genomic_DNA"/>
</dbReference>
<dbReference type="EMBL" id="L77865">
    <property type="protein sequence ID" value="AAB51603.1"/>
    <property type="molecule type" value="mRNA"/>
</dbReference>
<dbReference type="CCDS" id="CCDS80775.1">
    <molecule id="Q9QXJ1-2"/>
</dbReference>
<dbReference type="CCDS" id="CCDS80776.1">
    <molecule id="Q9QXJ1-1"/>
</dbReference>
<dbReference type="RefSeq" id="NP_001240814.1">
    <property type="nucleotide sequence ID" value="NM_001253885.1"/>
</dbReference>
<dbReference type="RefSeq" id="NP_001240815.1">
    <property type="nucleotide sequence ID" value="NM_001253886.1"/>
</dbReference>
<dbReference type="RefSeq" id="NP_033815.1">
    <property type="nucleotide sequence ID" value="NM_009685.3"/>
</dbReference>
<dbReference type="RefSeq" id="XP_006507293.1">
    <property type="nucleotide sequence ID" value="XM_006507230.2"/>
</dbReference>
<dbReference type="RefSeq" id="XP_006507294.1">
    <property type="nucleotide sequence ID" value="XM_006507231.1"/>
</dbReference>
<dbReference type="RefSeq" id="XP_017177435.1">
    <property type="nucleotide sequence ID" value="XM_017321946.1"/>
</dbReference>
<dbReference type="BMRB" id="Q9QXJ1"/>
<dbReference type="SMR" id="Q9QXJ1"/>
<dbReference type="BioGRID" id="198141">
    <property type="interactions" value="11"/>
</dbReference>
<dbReference type="CORUM" id="Q9QXJ1"/>
<dbReference type="FunCoup" id="Q9QXJ1">
    <property type="interactions" value="723"/>
</dbReference>
<dbReference type="IntAct" id="Q9QXJ1">
    <property type="interactions" value="3"/>
</dbReference>
<dbReference type="MINT" id="Q9QXJ1"/>
<dbReference type="STRING" id="10090.ENSMUSP00000140116"/>
<dbReference type="GlyGen" id="Q9QXJ1">
    <property type="glycosylation" value="2 sites, 1 O-linked glycan (2 sites)"/>
</dbReference>
<dbReference type="iPTMnet" id="Q9QXJ1"/>
<dbReference type="PhosphoSitePlus" id="Q9QXJ1"/>
<dbReference type="SwissPalm" id="Q9QXJ1"/>
<dbReference type="jPOST" id="Q9QXJ1"/>
<dbReference type="PaxDb" id="10090-ENSMUSP00000140116"/>
<dbReference type="ProteomicsDB" id="296328">
    <molecule id="Q9QXJ1-1"/>
</dbReference>
<dbReference type="ProteomicsDB" id="296329">
    <molecule id="Q9QXJ1-2"/>
</dbReference>
<dbReference type="Pumba" id="Q9QXJ1"/>
<dbReference type="Antibodypedia" id="23808">
    <property type="antibodies" value="405 antibodies from 38 providers"/>
</dbReference>
<dbReference type="DNASU" id="11785"/>
<dbReference type="GeneID" id="11785"/>
<dbReference type="KEGG" id="mmu:11785"/>
<dbReference type="UCSC" id="uc009iyi.2">
    <molecule id="Q9QXJ1-2"/>
    <property type="organism name" value="mouse"/>
</dbReference>
<dbReference type="AGR" id="MGI:107765"/>
<dbReference type="CTD" id="322"/>
<dbReference type="MGI" id="MGI:107765">
    <property type="gene designation" value="Apbb1"/>
</dbReference>
<dbReference type="VEuPathDB" id="HostDB:ENSMUSG00000037032"/>
<dbReference type="eggNOG" id="ENOG502QT08">
    <property type="taxonomic scope" value="Eukaryota"/>
</dbReference>
<dbReference type="InParanoid" id="Q9QXJ1"/>
<dbReference type="OrthoDB" id="5969782at2759"/>
<dbReference type="TreeFam" id="TF314331"/>
<dbReference type="Reactome" id="R-MMU-5693565">
    <property type="pathway name" value="Recruitment and ATM-mediated phosphorylation of repair and signaling proteins at DNA double strand breaks"/>
</dbReference>
<dbReference type="BioGRID-ORCS" id="11785">
    <property type="hits" value="2 hits in 108 CRISPR screens"/>
</dbReference>
<dbReference type="ChiTaRS" id="Apbb1">
    <property type="organism name" value="mouse"/>
</dbReference>
<dbReference type="PRO" id="PR:Q9QXJ1"/>
<dbReference type="Proteomes" id="UP000000589">
    <property type="component" value="Chromosome 7"/>
</dbReference>
<dbReference type="RNAct" id="Q9QXJ1">
    <property type="molecule type" value="protein"/>
</dbReference>
<dbReference type="Bgee" id="ENSMUSG00000037032">
    <property type="expression patterns" value="Expressed in entorhinal cortex and 247 other cell types or tissues"/>
</dbReference>
<dbReference type="ExpressionAtlas" id="Q9QXJ1">
    <property type="expression patterns" value="baseline and differential"/>
</dbReference>
<dbReference type="GO" id="GO:0005737">
    <property type="term" value="C:cytoplasm"/>
    <property type="evidence" value="ECO:0000314"/>
    <property type="project" value="UniProtKB"/>
</dbReference>
<dbReference type="GO" id="GO:0098978">
    <property type="term" value="C:glutamatergic synapse"/>
    <property type="evidence" value="ECO:0000314"/>
    <property type="project" value="SynGO"/>
</dbReference>
<dbReference type="GO" id="GO:0030426">
    <property type="term" value="C:growth cone"/>
    <property type="evidence" value="ECO:0000250"/>
    <property type="project" value="UniProtKB"/>
</dbReference>
<dbReference type="GO" id="GO:0030027">
    <property type="term" value="C:lamellipodium"/>
    <property type="evidence" value="ECO:0000250"/>
    <property type="project" value="UniProtKB"/>
</dbReference>
<dbReference type="GO" id="GO:0031594">
    <property type="term" value="C:neuromuscular junction"/>
    <property type="evidence" value="ECO:0000314"/>
    <property type="project" value="SynGO"/>
</dbReference>
<dbReference type="GO" id="GO:0016607">
    <property type="term" value="C:nuclear speck"/>
    <property type="evidence" value="ECO:0007669"/>
    <property type="project" value="UniProtKB-SubCell"/>
</dbReference>
<dbReference type="GO" id="GO:0005634">
    <property type="term" value="C:nucleus"/>
    <property type="evidence" value="ECO:0000314"/>
    <property type="project" value="UniProtKB"/>
</dbReference>
<dbReference type="GO" id="GO:0005886">
    <property type="term" value="C:plasma membrane"/>
    <property type="evidence" value="ECO:0007669"/>
    <property type="project" value="UniProtKB-SubCell"/>
</dbReference>
<dbReference type="GO" id="GO:0098685">
    <property type="term" value="C:Schaffer collateral - CA1 synapse"/>
    <property type="evidence" value="ECO:0000314"/>
    <property type="project" value="SynGO"/>
</dbReference>
<dbReference type="GO" id="GO:0045202">
    <property type="term" value="C:synapse"/>
    <property type="evidence" value="ECO:0000250"/>
    <property type="project" value="UniProtKB"/>
</dbReference>
<dbReference type="GO" id="GO:0001540">
    <property type="term" value="F:amyloid-beta binding"/>
    <property type="evidence" value="ECO:0007669"/>
    <property type="project" value="InterPro"/>
</dbReference>
<dbReference type="GO" id="GO:0031625">
    <property type="term" value="F:ubiquitin protein ligase binding"/>
    <property type="evidence" value="ECO:0000353"/>
    <property type="project" value="UniProtKB"/>
</dbReference>
<dbReference type="GO" id="GO:0006915">
    <property type="term" value="P:apoptotic process"/>
    <property type="evidence" value="ECO:0007669"/>
    <property type="project" value="UniProtKB-KW"/>
</dbReference>
<dbReference type="GO" id="GO:0007411">
    <property type="term" value="P:axon guidance"/>
    <property type="evidence" value="ECO:0000316"/>
    <property type="project" value="MGI"/>
</dbReference>
<dbReference type="GO" id="GO:0021953">
    <property type="term" value="P:central nervous system neuron differentiation"/>
    <property type="evidence" value="ECO:0000315"/>
    <property type="project" value="MGI"/>
</dbReference>
<dbReference type="GO" id="GO:0006325">
    <property type="term" value="P:chromatin organization"/>
    <property type="evidence" value="ECO:0007669"/>
    <property type="project" value="UniProtKB-KW"/>
</dbReference>
<dbReference type="GO" id="GO:0006974">
    <property type="term" value="P:DNA damage response"/>
    <property type="evidence" value="ECO:0000314"/>
    <property type="project" value="UniProtKB"/>
</dbReference>
<dbReference type="GO" id="GO:0006302">
    <property type="term" value="P:double-strand break repair"/>
    <property type="evidence" value="ECO:0000315"/>
    <property type="project" value="UniProtKB"/>
</dbReference>
<dbReference type="GO" id="GO:0030198">
    <property type="term" value="P:extracellular matrix organization"/>
    <property type="evidence" value="ECO:0000316"/>
    <property type="project" value="MGI"/>
</dbReference>
<dbReference type="GO" id="GO:1902807">
    <property type="term" value="P:negative regulation of cell cycle G1/S phase transition"/>
    <property type="evidence" value="ECO:0000250"/>
    <property type="project" value="UniProtKB"/>
</dbReference>
<dbReference type="GO" id="GO:0045665">
    <property type="term" value="P:negative regulation of neuron differentiation"/>
    <property type="evidence" value="ECO:0000315"/>
    <property type="project" value="MGI"/>
</dbReference>
<dbReference type="GO" id="GO:0001764">
    <property type="term" value="P:neuron migration"/>
    <property type="evidence" value="ECO:0000316"/>
    <property type="project" value="MGI"/>
</dbReference>
<dbReference type="GO" id="GO:0043065">
    <property type="term" value="P:positive regulation of apoptotic process"/>
    <property type="evidence" value="ECO:0000250"/>
    <property type="project" value="UniProtKB"/>
</dbReference>
<dbReference type="GO" id="GO:0045739">
    <property type="term" value="P:positive regulation of DNA repair"/>
    <property type="evidence" value="ECO:0000315"/>
    <property type="project" value="UniProtKB"/>
</dbReference>
<dbReference type="GO" id="GO:0045944">
    <property type="term" value="P:positive regulation of transcription by RNA polymerase II"/>
    <property type="evidence" value="ECO:0000316"/>
    <property type="project" value="MGI"/>
</dbReference>
<dbReference type="GO" id="GO:0050821">
    <property type="term" value="P:protein stabilization"/>
    <property type="evidence" value="ECO:0000303"/>
    <property type="project" value="UniProtKB"/>
</dbReference>
<dbReference type="GO" id="GO:0006939">
    <property type="term" value="P:smooth muscle contraction"/>
    <property type="evidence" value="ECO:0000315"/>
    <property type="project" value="UniProtKB"/>
</dbReference>
<dbReference type="GO" id="GO:0050808">
    <property type="term" value="P:synapse organization"/>
    <property type="evidence" value="ECO:0000314"/>
    <property type="project" value="SynGO"/>
</dbReference>
<dbReference type="GO" id="GO:0008542">
    <property type="term" value="P:visual learning"/>
    <property type="evidence" value="ECO:0000315"/>
    <property type="project" value="MGI"/>
</dbReference>
<dbReference type="CDD" id="cd01272">
    <property type="entry name" value="PTB1_Fe65"/>
    <property type="match status" value="1"/>
</dbReference>
<dbReference type="CDD" id="cd01271">
    <property type="entry name" value="PTB2_Fe65"/>
    <property type="match status" value="1"/>
</dbReference>
<dbReference type="CDD" id="cd00201">
    <property type="entry name" value="WW"/>
    <property type="match status" value="1"/>
</dbReference>
<dbReference type="FunFam" id="2.30.29.30:FF:000019">
    <property type="entry name" value="Amyloid beta (A4) precursor protein-binding, family B, member 1 (Fe65)"/>
    <property type="match status" value="1"/>
</dbReference>
<dbReference type="FunFam" id="2.20.70.10:FF:000003">
    <property type="entry name" value="amyloid beta A4 precursor protein-binding family B member 2"/>
    <property type="match status" value="1"/>
</dbReference>
<dbReference type="FunFam" id="2.30.29.30:FF:000034">
    <property type="entry name" value="amyloid beta A4 precursor protein-binding family B member 2"/>
    <property type="match status" value="1"/>
</dbReference>
<dbReference type="Gene3D" id="2.20.70.10">
    <property type="match status" value="1"/>
</dbReference>
<dbReference type="Gene3D" id="2.30.29.30">
    <property type="entry name" value="Pleckstrin-homology domain (PH domain)/Phosphotyrosine-binding domain (PTB)"/>
    <property type="match status" value="2"/>
</dbReference>
<dbReference type="InterPro" id="IPR039576">
    <property type="entry name" value="APBB1/2/3"/>
</dbReference>
<dbReference type="InterPro" id="IPR011993">
    <property type="entry name" value="PH-like_dom_sf"/>
</dbReference>
<dbReference type="InterPro" id="IPR006020">
    <property type="entry name" value="PTB/PI_dom"/>
</dbReference>
<dbReference type="InterPro" id="IPR001202">
    <property type="entry name" value="WW_dom"/>
</dbReference>
<dbReference type="InterPro" id="IPR036020">
    <property type="entry name" value="WW_dom_sf"/>
</dbReference>
<dbReference type="PANTHER" id="PTHR14058">
    <property type="entry name" value="AMYLOID BETA A4 PRECURSOR PROTEIN-BINDING FAMILY B"/>
    <property type="match status" value="1"/>
</dbReference>
<dbReference type="PANTHER" id="PTHR14058:SF5">
    <property type="entry name" value="AMYLOID BETA PRECURSOR PROTEIN BINDING FAMILY B MEMBER 1"/>
    <property type="match status" value="1"/>
</dbReference>
<dbReference type="Pfam" id="PF00640">
    <property type="entry name" value="PID"/>
    <property type="match status" value="2"/>
</dbReference>
<dbReference type="Pfam" id="PF00397">
    <property type="entry name" value="WW"/>
    <property type="match status" value="1"/>
</dbReference>
<dbReference type="SMART" id="SM00462">
    <property type="entry name" value="PTB"/>
    <property type="match status" value="2"/>
</dbReference>
<dbReference type="SMART" id="SM00456">
    <property type="entry name" value="WW"/>
    <property type="match status" value="1"/>
</dbReference>
<dbReference type="SUPFAM" id="SSF50729">
    <property type="entry name" value="PH domain-like"/>
    <property type="match status" value="2"/>
</dbReference>
<dbReference type="SUPFAM" id="SSF51045">
    <property type="entry name" value="WW domain"/>
    <property type="match status" value="1"/>
</dbReference>
<dbReference type="PROSITE" id="PS01179">
    <property type="entry name" value="PID"/>
    <property type="match status" value="2"/>
</dbReference>
<dbReference type="PROSITE" id="PS01159">
    <property type="entry name" value="WW_DOMAIN_1"/>
    <property type="match status" value="1"/>
</dbReference>
<dbReference type="PROSITE" id="PS50020">
    <property type="entry name" value="WW_DOMAIN_2"/>
    <property type="match status" value="1"/>
</dbReference>
<gene>
    <name evidence="17" type="primary">Apbb1</name>
    <name evidence="13" type="synonym">Fe65</name>
    <name evidence="17" type="synonym">Rir</name>
</gene>
<reference key="1">
    <citation type="submission" date="1999-11" db="EMBL/GenBank/DDBJ databases">
        <authorList>
            <person name="Liakicheva A.V."/>
            <person name="Ivanova N.B."/>
            <person name="Belyavsky A.V."/>
        </authorList>
    </citation>
    <scope>NUCLEOTIDE SEQUENCE [MRNA] (ISOFORM 2)</scope>
</reference>
<reference key="2">
    <citation type="journal article" date="2005" name="Science">
        <title>The transcriptional landscape of the mammalian genome.</title>
        <authorList>
            <person name="Carninci P."/>
            <person name="Kasukawa T."/>
            <person name="Katayama S."/>
            <person name="Gough J."/>
            <person name="Frith M.C."/>
            <person name="Maeda N."/>
            <person name="Oyama R."/>
            <person name="Ravasi T."/>
            <person name="Lenhard B."/>
            <person name="Wells C."/>
            <person name="Kodzius R."/>
            <person name="Shimokawa K."/>
            <person name="Bajic V.B."/>
            <person name="Brenner S.E."/>
            <person name="Batalov S."/>
            <person name="Forrest A.R."/>
            <person name="Zavolan M."/>
            <person name="Davis M.J."/>
            <person name="Wilming L.G."/>
            <person name="Aidinis V."/>
            <person name="Allen J.E."/>
            <person name="Ambesi-Impiombato A."/>
            <person name="Apweiler R."/>
            <person name="Aturaliya R.N."/>
            <person name="Bailey T.L."/>
            <person name="Bansal M."/>
            <person name="Baxter L."/>
            <person name="Beisel K.W."/>
            <person name="Bersano T."/>
            <person name="Bono H."/>
            <person name="Chalk A.M."/>
            <person name="Chiu K.P."/>
            <person name="Choudhary V."/>
            <person name="Christoffels A."/>
            <person name="Clutterbuck D.R."/>
            <person name="Crowe M.L."/>
            <person name="Dalla E."/>
            <person name="Dalrymple B.P."/>
            <person name="de Bono B."/>
            <person name="Della Gatta G."/>
            <person name="di Bernardo D."/>
            <person name="Down T."/>
            <person name="Engstrom P."/>
            <person name="Fagiolini M."/>
            <person name="Faulkner G."/>
            <person name="Fletcher C.F."/>
            <person name="Fukushima T."/>
            <person name="Furuno M."/>
            <person name="Futaki S."/>
            <person name="Gariboldi M."/>
            <person name="Georgii-Hemming P."/>
            <person name="Gingeras T.R."/>
            <person name="Gojobori T."/>
            <person name="Green R.E."/>
            <person name="Gustincich S."/>
            <person name="Harbers M."/>
            <person name="Hayashi Y."/>
            <person name="Hensch T.K."/>
            <person name="Hirokawa N."/>
            <person name="Hill D."/>
            <person name="Huminiecki L."/>
            <person name="Iacono M."/>
            <person name="Ikeo K."/>
            <person name="Iwama A."/>
            <person name="Ishikawa T."/>
            <person name="Jakt M."/>
            <person name="Kanapin A."/>
            <person name="Katoh M."/>
            <person name="Kawasawa Y."/>
            <person name="Kelso J."/>
            <person name="Kitamura H."/>
            <person name="Kitano H."/>
            <person name="Kollias G."/>
            <person name="Krishnan S.P."/>
            <person name="Kruger A."/>
            <person name="Kummerfeld S.K."/>
            <person name="Kurochkin I.V."/>
            <person name="Lareau L.F."/>
            <person name="Lazarevic D."/>
            <person name="Lipovich L."/>
            <person name="Liu J."/>
            <person name="Liuni S."/>
            <person name="McWilliam S."/>
            <person name="Madan Babu M."/>
            <person name="Madera M."/>
            <person name="Marchionni L."/>
            <person name="Matsuda H."/>
            <person name="Matsuzawa S."/>
            <person name="Miki H."/>
            <person name="Mignone F."/>
            <person name="Miyake S."/>
            <person name="Morris K."/>
            <person name="Mottagui-Tabar S."/>
            <person name="Mulder N."/>
            <person name="Nakano N."/>
            <person name="Nakauchi H."/>
            <person name="Ng P."/>
            <person name="Nilsson R."/>
            <person name="Nishiguchi S."/>
            <person name="Nishikawa S."/>
            <person name="Nori F."/>
            <person name="Ohara O."/>
            <person name="Okazaki Y."/>
            <person name="Orlando V."/>
            <person name="Pang K.C."/>
            <person name="Pavan W.J."/>
            <person name="Pavesi G."/>
            <person name="Pesole G."/>
            <person name="Petrovsky N."/>
            <person name="Piazza S."/>
            <person name="Reed J."/>
            <person name="Reid J.F."/>
            <person name="Ring B.Z."/>
            <person name="Ringwald M."/>
            <person name="Rost B."/>
            <person name="Ruan Y."/>
            <person name="Salzberg S.L."/>
            <person name="Sandelin A."/>
            <person name="Schneider C."/>
            <person name="Schoenbach C."/>
            <person name="Sekiguchi K."/>
            <person name="Semple C.A."/>
            <person name="Seno S."/>
            <person name="Sessa L."/>
            <person name="Sheng Y."/>
            <person name="Shibata Y."/>
            <person name="Shimada H."/>
            <person name="Shimada K."/>
            <person name="Silva D."/>
            <person name="Sinclair B."/>
            <person name="Sperling S."/>
            <person name="Stupka E."/>
            <person name="Sugiura K."/>
            <person name="Sultana R."/>
            <person name="Takenaka Y."/>
            <person name="Taki K."/>
            <person name="Tammoja K."/>
            <person name="Tan S.L."/>
            <person name="Tang S."/>
            <person name="Taylor M.S."/>
            <person name="Tegner J."/>
            <person name="Teichmann S.A."/>
            <person name="Ueda H.R."/>
            <person name="van Nimwegen E."/>
            <person name="Verardo R."/>
            <person name="Wei C.L."/>
            <person name="Yagi K."/>
            <person name="Yamanishi H."/>
            <person name="Zabarovsky E."/>
            <person name="Zhu S."/>
            <person name="Zimmer A."/>
            <person name="Hide W."/>
            <person name="Bult C."/>
            <person name="Grimmond S.M."/>
            <person name="Teasdale R.D."/>
            <person name="Liu E.T."/>
            <person name="Brusic V."/>
            <person name="Quackenbush J."/>
            <person name="Wahlestedt C."/>
            <person name="Mattick J.S."/>
            <person name="Hume D.A."/>
            <person name="Kai C."/>
            <person name="Sasaki D."/>
            <person name="Tomaru Y."/>
            <person name="Fukuda S."/>
            <person name="Kanamori-Katayama M."/>
            <person name="Suzuki M."/>
            <person name="Aoki J."/>
            <person name="Arakawa T."/>
            <person name="Iida J."/>
            <person name="Imamura K."/>
            <person name="Itoh M."/>
            <person name="Kato T."/>
            <person name="Kawaji H."/>
            <person name="Kawagashira N."/>
            <person name="Kawashima T."/>
            <person name="Kojima M."/>
            <person name="Kondo S."/>
            <person name="Konno H."/>
            <person name="Nakano K."/>
            <person name="Ninomiya N."/>
            <person name="Nishio T."/>
            <person name="Okada M."/>
            <person name="Plessy C."/>
            <person name="Shibata K."/>
            <person name="Shiraki T."/>
            <person name="Suzuki S."/>
            <person name="Tagami M."/>
            <person name="Waki K."/>
            <person name="Watahiki A."/>
            <person name="Okamura-Oho Y."/>
            <person name="Suzuki H."/>
            <person name="Kawai J."/>
            <person name="Hayashizaki Y."/>
        </authorList>
    </citation>
    <scope>NUCLEOTIDE SEQUENCE [LARGE SCALE MRNA] (ISOFORMS 1 AND 2)</scope>
    <source>
        <strain>C57BL/6J</strain>
        <tissue>Hippocampus</tissue>
        <tissue>Spinal ganglion</tissue>
    </source>
</reference>
<reference key="3">
    <citation type="journal article" date="2009" name="PLoS Biol.">
        <title>Lineage-specific biology revealed by a finished genome assembly of the mouse.</title>
        <authorList>
            <person name="Church D.M."/>
            <person name="Goodstadt L."/>
            <person name="Hillier L.W."/>
            <person name="Zody M.C."/>
            <person name="Goldstein S."/>
            <person name="She X."/>
            <person name="Bult C.J."/>
            <person name="Agarwala R."/>
            <person name="Cherry J.L."/>
            <person name="DiCuccio M."/>
            <person name="Hlavina W."/>
            <person name="Kapustin Y."/>
            <person name="Meric P."/>
            <person name="Maglott D."/>
            <person name="Birtle Z."/>
            <person name="Marques A.C."/>
            <person name="Graves T."/>
            <person name="Zhou S."/>
            <person name="Teague B."/>
            <person name="Potamousis K."/>
            <person name="Churas C."/>
            <person name="Place M."/>
            <person name="Herschleb J."/>
            <person name="Runnheim R."/>
            <person name="Forrest D."/>
            <person name="Amos-Landgraf J."/>
            <person name="Schwartz D.C."/>
            <person name="Cheng Z."/>
            <person name="Lindblad-Toh K."/>
            <person name="Eichler E.E."/>
            <person name="Ponting C.P."/>
        </authorList>
    </citation>
    <scope>NUCLEOTIDE SEQUENCE [LARGE SCALE GENOMIC DNA]</scope>
    <source>
        <strain>C57BL/6J</strain>
    </source>
</reference>
<reference key="4">
    <citation type="journal article" date="1996" name="Hum. Mol. Genet.">
        <title>cDNA cloning and chromosome mapping of the human Fe65 gene: interaction of the conserved cytoplasmic domains of the human beta-amyloid precursor protein and its homologues with the mouse Fe65 protein.</title>
        <authorList>
            <person name="Bressler S.L."/>
            <person name="Gray M.D."/>
            <person name="Sopher B.L."/>
            <person name="Hu Q."/>
            <person name="Hearn M.G."/>
            <person name="Pham D.G."/>
            <person name="Dinulos M.B."/>
            <person name="Fukuchi K."/>
            <person name="Sisodia S.S."/>
            <person name="Miller M.A."/>
            <person name="Disteche C.M."/>
            <person name="Martin G.M."/>
        </authorList>
    </citation>
    <scope>NUCLEOTIDE SEQUENCE [MRNA] OF 498-674</scope>
    <source>
        <tissue>Embryo</tissue>
    </source>
</reference>
<reference key="5">
    <citation type="journal article" date="1997" name="J. Biol. Chem.">
        <title>The WW domain of neural protein FE65 interacts with proline-rich motifs in Mena, the mammalian homolog of Drosophila enabled.</title>
        <authorList>
            <person name="Ermekova K.S."/>
            <person name="Zambrano N."/>
            <person name="Linn H."/>
            <person name="Minopoli G."/>
            <person name="Gertler F."/>
            <person name="Russo T."/>
            <person name="Sudol M."/>
        </authorList>
    </citation>
    <scope>INTERACTION WITH APBB1IP AND ENAH</scope>
    <scope>MUTAGENESIS OF TRP-280 AND PRO-283</scope>
</reference>
<reference key="6">
    <citation type="journal article" date="2007" name="J. Biol. Chem.">
        <title>Essential roles for Fe65, Alzheimer amyloid precursor-binding protein, in the cellular response to DNA damage.</title>
        <authorList>
            <person name="Minopoli G."/>
            <person name="Stante M."/>
            <person name="Napolitano F."/>
            <person name="Telese F."/>
            <person name="Aloia L."/>
            <person name="De Felice M."/>
            <person name="Di Lauro R."/>
            <person name="Pacelli R."/>
            <person name="Brunetti A."/>
            <person name="Zambrano N."/>
            <person name="Russo T."/>
        </authorList>
    </citation>
    <scope>FUNCTION</scope>
    <scope>SUBCELLULAR LOCATION</scope>
    <scope>PHOSPHORYLATION</scope>
    <scope>DISRUPTION PHENOTYPE</scope>
</reference>
<reference key="7">
    <citation type="journal article" date="2009" name="PLoS ONE">
        <title>FE65 binds Teashirt, inhibiting expression of the primate-specific caspase-4.</title>
        <authorList>
            <person name="Kajiwara Y."/>
            <person name="Akram A."/>
            <person name="Katsel P."/>
            <person name="Haroutunian V."/>
            <person name="Schmeidler J."/>
            <person name="Beecham G."/>
            <person name="Haines J.L."/>
            <person name="Pericak-Vance M.A."/>
            <person name="Buxbaum J.D."/>
        </authorList>
    </citation>
    <scope>SUBCELLULAR LOCATION</scope>
    <scope>INTERACTION WITH TSHZ1; TSHZ2 AND TSHZ3</scope>
</reference>
<reference key="8">
    <citation type="journal article" date="2010" name="Cell">
        <title>A tissue-specific atlas of mouse protein phosphorylation and expression.</title>
        <authorList>
            <person name="Huttlin E.L."/>
            <person name="Jedrychowski M.P."/>
            <person name="Elias J.E."/>
            <person name="Goswami T."/>
            <person name="Rad R."/>
            <person name="Beausoleil S.A."/>
            <person name="Villen J."/>
            <person name="Haas W."/>
            <person name="Sowa M.E."/>
            <person name="Gygi S.P."/>
        </authorList>
    </citation>
    <scope>PHOSPHORYLATION [LARGE SCALE ANALYSIS] AT SER-135 AND SER-517</scope>
    <scope>IDENTIFICATION BY MASS SPECTROMETRY [LARGE SCALE ANALYSIS]</scope>
    <source>
        <tissue>Brain</tissue>
        <tissue>Heart</tissue>
        <tissue>Lung</tissue>
    </source>
</reference>
<reference key="9">
    <citation type="journal article" date="2015" name="Cell Death Differ.">
        <title>Regulation of neuronal survival and morphology by the E3 ubiquitin ligase RNF157.</title>
        <authorList>
            <person name="Matz A."/>
            <person name="Lee S.J."/>
            <person name="Schwedhelm-Domeyer N."/>
            <person name="Zanini D."/>
            <person name="Holubowska A."/>
            <person name="Kannan M."/>
            <person name="Farnworth M."/>
            <person name="Jahn O."/>
            <person name="Goepfert M.C."/>
            <person name="Stegmueller J."/>
        </authorList>
    </citation>
    <scope>INTERACTION WITH RNF157</scope>
    <scope>UBIQUITINATION BY RNF157</scope>
    <scope>FUNCTION</scope>
</reference>
<reference key="10">
    <citation type="journal article" date="2015" name="FASEB J.">
        <title>FE65 and FE65L1 amyloid precursor protein-binding protein compound null mice display adult-onset cataract and muscle weakness.</title>
        <authorList>
            <person name="Suh J."/>
            <person name="Moncaster J.A."/>
            <person name="Wang L."/>
            <person name="Hafeez I."/>
            <person name="Herz J."/>
            <person name="Tanzi R.E."/>
            <person name="Goldstein L.E."/>
            <person name="Guenette S.Y."/>
        </authorList>
    </citation>
    <scope>FUNCTION</scope>
    <scope>TISSUE SPECIFICITY</scope>
    <scope>DISRUPTION PHENOTYPE</scope>
</reference>
<reference key="11">
    <citation type="journal article" date="2016" name="Sci. Rep.">
        <title>FE65 and FE65L1 share common synaptic functions and genetically interact with the APP family in neuromuscular junction formation.</title>
        <authorList>
            <person name="Strecker P."/>
            <person name="Ludewig S."/>
            <person name="Rust M."/>
            <person name="Mundinger T.A."/>
            <person name="Goerlich A."/>
            <person name="Kraechan E.G."/>
            <person name="Mehrfeld C."/>
            <person name="Herz J."/>
            <person name="Korte M."/>
            <person name="Guenette S.Y."/>
            <person name="Kins S."/>
        </authorList>
    </citation>
    <scope>FUNCTION</scope>
    <scope>DISRUPTION PHENOTYPE</scope>
</reference>
<keyword id="KW-0007">Acetylation</keyword>
<keyword id="KW-0010">Activator</keyword>
<keyword id="KW-0025">Alternative splicing</keyword>
<keyword id="KW-0053">Apoptosis</keyword>
<keyword id="KW-1003">Cell membrane</keyword>
<keyword id="KW-0966">Cell projection</keyword>
<keyword id="KW-0156">Chromatin regulator</keyword>
<keyword id="KW-0963">Cytoplasm</keyword>
<keyword id="KW-0227">DNA damage</keyword>
<keyword id="KW-0472">Membrane</keyword>
<keyword id="KW-0539">Nucleus</keyword>
<keyword id="KW-0597">Phosphoprotein</keyword>
<keyword id="KW-1185">Reference proteome</keyword>
<keyword id="KW-0677">Repeat</keyword>
<keyword id="KW-0678">Repressor</keyword>
<keyword id="KW-0804">Transcription</keyword>
<keyword id="KW-0805">Transcription regulation</keyword>
<keyword id="KW-0832">Ubl conjugation</keyword>
<name>APBB1_MOUSE</name>
<proteinExistence type="evidence at protein level"/>
<comment type="function">
    <text evidence="1 2 6 8 9 10">Transcription coregulator that can have both coactivator and corepressor functions (PubMed:17121854, PubMed:25342469). Adapter protein that forms a transcriptionally active complex with the gamma-secretase-derived amyloid precursor protein (APP) intracellular domain (PubMed:17121854, PubMed:25342469). Plays a central role in the response to DNA damage by translocating to the nucleus and inducing apoptosis. May act by specifically recognizing and binding histone H2AX phosphorylated on 'Tyr-142' (H2AXY142ph) at double-strand breaks (DSBs), recruiting other pro-apoptosis factors such as MAPK8/JNK1. Required for histone H4 acetylation at double-strand breaks (DSBs) (By similarity). Its ability to specifically bind modified histones and chromatin modifying enzymes such as KAT5/TIP60, probably explains its transcription activation activity (By similarity). Functions in association with TSHZ3, SET and HDAC factors as a transcriptional repressor, that inhibits the expression of CASP4. Associates with chromatin in a region surrounding the CASP4 transcriptional start site(s) (By similarity). Involved in hippocampal neurite branching and neuromuscular junction formation, as a result plays a role in spatial memory functioning (PubMed:27734846). Plays a role in the maintenance of lens transparency (PubMed:25757569). May play a role in muscle cell strength (PubMed:25757569, PubMed:27734846). Acts as a molecular adapter that functions in neurite outgrowth by activating the RAC1-ARF6 axis upon insulin treatment (By similarity).</text>
</comment>
<comment type="subunit">
    <text evidence="1 2 7 11">Component of a complex, at least composed of APBB1, RASD1/DEXRAS1 and APP (By similarity). Interacts (via PID domain 2) with APP (with the intracellular domain of the amyloid-beta precursor protein) (By similarity). Interacts (via PID domain 2) with RASD1/DEXRAS1; impairs the transcription activation activity (By similarity). Interacts (via PID domain 1) with KAT5/TIP60 (By similarity). Interacts (via the WW domain) with the proline-rich region of APBB1IP (PubMed:9407065). Interacts with TSHZ1 and TSHZ2 (PubMed:19343227). Interacts (via the WW domain) with histone H2AX (when phosphorylated on 'Tyr-142') and the proline-rich region of ENAH (PubMed:9407065). Interacts with MAPK8 (By similarity). Interacts (via PID domain 1) with TSHZ3 (via homeobox domain) (By similarity). Interacts with SET (By similarity). Found in a trimeric complex with HDAC1 and TSHZ3; the interaction between HDAC1 and APBB1 is mediated by TSHZ3 (By similarity). Interacts (via WWW domain) with NEK6. Interacts (via WWW domain) with ABL1. Interacts with RNF157 (By similarity). Interacts with ARF6 (By similarity).</text>
</comment>
<comment type="interaction">
    <interactant intactId="EBI-81338">
        <id>Q9QXJ1</id>
    </interactant>
    <interactant intactId="EBI-78814">
        <id>P12023</id>
        <label>App</label>
    </interactant>
    <organismsDiffer>false</organismsDiffer>
    <experiments>2</experiments>
</comment>
<comment type="subcellular location">
    <subcellularLocation>
        <location evidence="6">Cell membrane</location>
    </subcellularLocation>
    <subcellularLocation>
        <location evidence="6">Cytoplasm</location>
    </subcellularLocation>
    <subcellularLocation>
        <location evidence="6">Nucleus</location>
    </subcellularLocation>
    <subcellularLocation>
        <location evidence="7">Cell projection</location>
        <location evidence="7">Growth cone</location>
    </subcellularLocation>
    <subcellularLocation>
        <location>Nucleus speckle</location>
    </subcellularLocation>
    <text evidence="1 2 7">Colocalizes with TSHZ3 in the nucleus and in axonal growth cone (PubMed:19343227). Colocalizes with TSHZ3 in axonal growth cone (By similarity). Colocalizes with TSHZ3 in the nucleus (By similarity). In normal conditions, it mainly localizes to the cytoplasm, while a small fraction is tethered to the cell membrane via its interaction with APP (By similarity). Following exposure to DNA damaging agents, it is released from cell membrane and translocates to the nucleus (By similarity). Nuclear translocation is under the regulation of APP (By similarity). Colocalizes with NEK6 at the nuclear speckles (By similarity). Phosphorylation at Ser-610 by SGK1 promotes its localization to the nucleus (By similarity).</text>
</comment>
<comment type="alternative products">
    <event type="alternative splicing"/>
    <isoform>
        <id>Q9QXJ1-1</id>
        <name>1</name>
        <sequence type="displayed"/>
    </isoform>
    <isoform>
        <id>Q9QXJ1-2</id>
        <name>2</name>
        <sequence type="described" ref="VSP_011659"/>
    </isoform>
</comment>
<comment type="tissue specificity">
    <text evidence="9">Expressed in the brain, retinal lens and muscle cells (at protein level).</text>
</comment>
<comment type="PTM">
    <text evidence="8">Polyubiquitination by RNF157 leads to degradation by the proteasome (PubMed:25342469).</text>
</comment>
<comment type="PTM">
    <text evidence="1 2">Phosphorylation at Ser-610 by SGK1 promotes its localization to the nucleus (By similarity). Phosphorylated following nuclear translocation. Phosphorylation at Tyr-546 by ABL1 enhances transcriptional activation activity and reduces the affinity for RASD1/DEXRAS1 (By similarity).</text>
</comment>
<comment type="PTM">
    <text evidence="1">Acetylation at Lys-204 and Lys-701 by KAT5 promotes its transcription activator activity. Phosphorylated at Ser-459 by PKC upon insulin activation (By similarity).</text>
</comment>
<comment type="disruption phenotype">
    <text evidence="6 9 10">No phenotype in normal conditions (PubMed:17121854). Displays an increased sensitivity to genotoxic stress and exposure to DNA damaging agents (PubMed:17121854). Knockout mice have decreased muscle strength, however clasping ability is unaffected (PubMed:25757569). Impaired spatial memory retrieval and learning (PubMed:27734846). Reduced branching of hippocampal neurites and increased fragmentation of neuromuscular junctions (PubMed:27734846). APBB1 and APBB2 double knockout mice show progressive retinal lens disruption from 1 month of age, morphologically lenses show massive vacuolization, lens capsule rupture and disruption of the lens fiber cells organization (PubMed:25757569). Decreased muscle strength, however clasping ability is unaffected (PubMed:25757569, PubMed:27734846). Defects in peripheral motor function including balance and coordination, reduced environmental anxiety, reduced hippocampal basal synaptic transmission and synaptic plasticity (PubMed:27734846).</text>
</comment>
<organism>
    <name type="scientific">Mus musculus</name>
    <name type="common">Mouse</name>
    <dbReference type="NCBI Taxonomy" id="10090"/>
    <lineage>
        <taxon>Eukaryota</taxon>
        <taxon>Metazoa</taxon>
        <taxon>Chordata</taxon>
        <taxon>Craniata</taxon>
        <taxon>Vertebrata</taxon>
        <taxon>Euteleostomi</taxon>
        <taxon>Mammalia</taxon>
        <taxon>Eutheria</taxon>
        <taxon>Euarchontoglires</taxon>
        <taxon>Glires</taxon>
        <taxon>Rodentia</taxon>
        <taxon>Myomorpha</taxon>
        <taxon>Muroidea</taxon>
        <taxon>Muridae</taxon>
        <taxon>Murinae</taxon>
        <taxon>Mus</taxon>
        <taxon>Mus</taxon>
    </lineage>
</organism>
<protein>
    <recommendedName>
        <fullName evidence="1">Amyloid beta precursor protein binding family B member 1</fullName>
    </recommendedName>
    <alternativeName>
        <fullName evidence="17">Amyloid-beta A4 precursor protein-binding family B member 1</fullName>
    </alternativeName>
    <alternativeName>
        <fullName evidence="14">Protein Fe65</fullName>
    </alternativeName>
</protein>
<sequence length="710" mass="77384">MSVPSSLSQSAINANSHGGPALSFPLPLHAAHNQLLNAKLQATAVVPKDLRSAMGEGSVPEPGPANAKWLKEGQNQLRRAATAHRDQNRNVTLTLAEEASQEAETAPLGPKGLMHLYSELELSAHNAANRGLHGSALIINTQEQGPDEGEEKAAGEAEEDDEDEEEEEEEEDLSSPPGLPEPLENVEVPSGPQALTDGPREHSKSASLLFGMRNSAASDEDSSWATLSQGSPSYGSPEDTDSFWNPNAFETDSDLPAGWMRVQDTSGTYYWHIPTGTTQWEPPGRASPSQGSSPQEESQLTWTGFAHQEGFEEGEFWKDEPSEEAPMELGLKDPEEATLSFPAQSLSPEPVPQEEEKLSQRNANPGIKCFAVRSLGWVEMTEEELAPGRSSVAVNNCIRQLSYHKNNLHDPMAGGWGEGKDLLLQLEDETLKLVEPQNQTLLHAQPIVSIRVWGVGRDSGSNRDFAYVARDKLTQMLKCHVFRCEAPAKNIATSLHEICSKIMSERRNARCLVNGLSLDHSKLVDVPFQVEFPAPKNELVQKFQVYYLGNVPVAKPVGVDVINGALESVLSSSSREQWTPSHVSVAPATLTILHQQTEAVLGECRVRFLSFLAVGRDVHTFAFIMAAGPASFCCHMFWCEPNAASLSEAVQAACMLRYQKCLDARSQTSTSCLPAPPAESVARRVGWTVRRGVQSLWGSLKPKRLGSQTP</sequence>
<feature type="chain" id="PRO_0000076050" description="Amyloid beta precursor protein binding family B member 1">
    <location>
        <begin position="1"/>
        <end position="710"/>
    </location>
</feature>
<feature type="domain" description="WW" evidence="4">
    <location>
        <begin position="253"/>
        <end position="285"/>
    </location>
</feature>
<feature type="domain" description="PID 1" evidence="3">
    <location>
        <begin position="370"/>
        <end position="509"/>
    </location>
</feature>
<feature type="domain" description="PID 2" evidence="3">
    <location>
        <begin position="542"/>
        <end position="699"/>
    </location>
</feature>
<feature type="region of interest" description="Disordered" evidence="5">
    <location>
        <begin position="143"/>
        <end position="256"/>
    </location>
</feature>
<feature type="region of interest" description="Disordered" evidence="5">
    <location>
        <begin position="276"/>
        <end position="300"/>
    </location>
</feature>
<feature type="compositionally biased region" description="Acidic residues" evidence="5">
    <location>
        <begin position="145"/>
        <end position="173"/>
    </location>
</feature>
<feature type="compositionally biased region" description="Polar residues" evidence="5">
    <location>
        <begin position="223"/>
        <end position="234"/>
    </location>
</feature>
<feature type="compositionally biased region" description="Low complexity" evidence="5">
    <location>
        <begin position="287"/>
        <end position="299"/>
    </location>
</feature>
<feature type="modified residue" description="Phosphoserine" evidence="18">
    <location>
        <position position="135"/>
    </location>
</feature>
<feature type="modified residue" description="N6-acetyllysine" evidence="1">
    <location>
        <position position="204"/>
    </location>
</feature>
<feature type="modified residue" description="Phosphoserine; by PKC" evidence="1">
    <location>
        <position position="459"/>
    </location>
</feature>
<feature type="modified residue" description="Phosphoserine" evidence="18">
    <location>
        <position position="517"/>
    </location>
</feature>
<feature type="modified residue" description="Phosphotyrosine; by ABL1" evidence="1">
    <location>
        <position position="547"/>
    </location>
</feature>
<feature type="modified residue" description="Phosphoserine; by SGK1" evidence="2">
    <location>
        <position position="610"/>
    </location>
</feature>
<feature type="modified residue" description="N6-acetyllysine" evidence="1">
    <location>
        <position position="701"/>
    </location>
</feature>
<feature type="splice variant" id="VSP_011659" description="In isoform 2." evidence="12 15">
    <location>
        <begin position="462"/>
        <end position="463"/>
    </location>
</feature>
<feature type="mutagenesis site" description="Abolishes ligand binding; when associated with A-283." evidence="11">
    <original>W</original>
    <variation>F</variation>
    <location>
        <position position="280"/>
    </location>
</feature>
<feature type="mutagenesis site" description="Abolishes ligand binding; when associated with F-280." evidence="11">
    <original>P</original>
    <variation>A</variation>
    <location>
        <position position="283"/>
    </location>
</feature>
<feature type="sequence conflict" description="In Ref. 1; AAF20141." evidence="16" ref="1">
    <original>T</original>
    <variation>A</variation>
    <location>
        <position position="92"/>
    </location>
</feature>
<feature type="sequence conflict" description="In Ref. 1; AAF20141." evidence="16" ref="1">
    <original>E</original>
    <variation>D</variation>
    <location>
        <position position="313"/>
    </location>
</feature>
<feature type="sequence conflict" description="In Ref. 2; BAC39033/BAE37645." evidence="16" ref="2">
    <original>SN</original>
    <variation>RE</variation>
    <location>
        <begin position="461"/>
        <end position="462"/>
    </location>
</feature>
<feature type="sequence conflict" description="In Ref. 2; BAC39033." evidence="16" ref="2">
    <original>A</original>
    <variation>S</variation>
    <location>
        <position position="630"/>
    </location>
</feature>
<accession>Q9QXJ1</accession>
<accession>E9QNW5</accession>
<accession>O08642</accession>
<accession>Q3TPU0</accession>
<accession>Q8BNF4</accession>
<accession>Q8BSR9</accession>